<comment type="function">
    <text evidence="1">Catalyzes the transfer of the phosphoribosyl group of 5-phosphorylribose-1-pyrophosphate (PRPP) to anthranilate to yield N-(5'-phosphoribosyl)-anthranilate (PRA).</text>
</comment>
<comment type="catalytic activity">
    <reaction evidence="1">
        <text>N-(5-phospho-beta-D-ribosyl)anthranilate + diphosphate = 5-phospho-alpha-D-ribose 1-diphosphate + anthranilate</text>
        <dbReference type="Rhea" id="RHEA:11768"/>
        <dbReference type="ChEBI" id="CHEBI:16567"/>
        <dbReference type="ChEBI" id="CHEBI:18277"/>
        <dbReference type="ChEBI" id="CHEBI:33019"/>
        <dbReference type="ChEBI" id="CHEBI:58017"/>
        <dbReference type="EC" id="2.4.2.18"/>
    </reaction>
</comment>
<comment type="cofactor">
    <cofactor evidence="1">
        <name>Mg(2+)</name>
        <dbReference type="ChEBI" id="CHEBI:18420"/>
    </cofactor>
    <text evidence="1">Binds 2 magnesium ions per monomer.</text>
</comment>
<comment type="pathway">
    <text evidence="1">Amino-acid biosynthesis; L-tryptophan biosynthesis; L-tryptophan from chorismate: step 2/5.</text>
</comment>
<comment type="subunit">
    <text evidence="1">Homodimer.</text>
</comment>
<comment type="similarity">
    <text evidence="1">Belongs to the anthranilate phosphoribosyltransferase family.</text>
</comment>
<gene>
    <name evidence="1" type="primary">trpD</name>
    <name type="ordered locus">Hlac_1939</name>
</gene>
<accession>B9LQ96</accession>
<dbReference type="EC" id="2.4.2.18" evidence="1"/>
<dbReference type="EMBL" id="CP001365">
    <property type="protein sequence ID" value="ACM57517.1"/>
    <property type="molecule type" value="Genomic_DNA"/>
</dbReference>
<dbReference type="RefSeq" id="WP_015910642.1">
    <property type="nucleotide sequence ID" value="NC_012029.1"/>
</dbReference>
<dbReference type="SMR" id="B9LQ96"/>
<dbReference type="GeneID" id="7399891"/>
<dbReference type="KEGG" id="hla:Hlac_1939"/>
<dbReference type="eggNOG" id="arCOG02012">
    <property type="taxonomic scope" value="Archaea"/>
</dbReference>
<dbReference type="HOGENOM" id="CLU_034315_2_1_2"/>
<dbReference type="UniPathway" id="UPA00035">
    <property type="reaction ID" value="UER00041"/>
</dbReference>
<dbReference type="Proteomes" id="UP000000740">
    <property type="component" value="Chromosome 1"/>
</dbReference>
<dbReference type="GO" id="GO:0005829">
    <property type="term" value="C:cytosol"/>
    <property type="evidence" value="ECO:0007669"/>
    <property type="project" value="TreeGrafter"/>
</dbReference>
<dbReference type="GO" id="GO:0004048">
    <property type="term" value="F:anthranilate phosphoribosyltransferase activity"/>
    <property type="evidence" value="ECO:0007669"/>
    <property type="project" value="UniProtKB-UniRule"/>
</dbReference>
<dbReference type="GO" id="GO:0000287">
    <property type="term" value="F:magnesium ion binding"/>
    <property type="evidence" value="ECO:0007669"/>
    <property type="project" value="UniProtKB-UniRule"/>
</dbReference>
<dbReference type="GO" id="GO:0000162">
    <property type="term" value="P:L-tryptophan biosynthetic process"/>
    <property type="evidence" value="ECO:0007669"/>
    <property type="project" value="UniProtKB-UniRule"/>
</dbReference>
<dbReference type="FunFam" id="3.40.1030.10:FF:000002">
    <property type="entry name" value="Anthranilate phosphoribosyltransferase"/>
    <property type="match status" value="1"/>
</dbReference>
<dbReference type="Gene3D" id="3.40.1030.10">
    <property type="entry name" value="Nucleoside phosphorylase/phosphoribosyltransferase catalytic domain"/>
    <property type="match status" value="1"/>
</dbReference>
<dbReference type="Gene3D" id="1.20.970.10">
    <property type="entry name" value="Transferase, Pyrimidine Nucleoside Phosphorylase, Chain C"/>
    <property type="match status" value="1"/>
</dbReference>
<dbReference type="HAMAP" id="MF_00211">
    <property type="entry name" value="TrpD"/>
    <property type="match status" value="1"/>
</dbReference>
<dbReference type="InterPro" id="IPR005940">
    <property type="entry name" value="Anthranilate_Pribosyl_Tfrase"/>
</dbReference>
<dbReference type="InterPro" id="IPR000312">
    <property type="entry name" value="Glycosyl_Trfase_fam3"/>
</dbReference>
<dbReference type="InterPro" id="IPR017459">
    <property type="entry name" value="Glycosyl_Trfase_fam3_N_dom"/>
</dbReference>
<dbReference type="InterPro" id="IPR036320">
    <property type="entry name" value="Glycosyl_Trfase_fam3_N_dom_sf"/>
</dbReference>
<dbReference type="InterPro" id="IPR035902">
    <property type="entry name" value="Nuc_phospho_transferase"/>
</dbReference>
<dbReference type="NCBIfam" id="TIGR01245">
    <property type="entry name" value="trpD"/>
    <property type="match status" value="1"/>
</dbReference>
<dbReference type="PANTHER" id="PTHR43285">
    <property type="entry name" value="ANTHRANILATE PHOSPHORIBOSYLTRANSFERASE"/>
    <property type="match status" value="1"/>
</dbReference>
<dbReference type="PANTHER" id="PTHR43285:SF2">
    <property type="entry name" value="ANTHRANILATE PHOSPHORIBOSYLTRANSFERASE"/>
    <property type="match status" value="1"/>
</dbReference>
<dbReference type="Pfam" id="PF02885">
    <property type="entry name" value="Glycos_trans_3N"/>
    <property type="match status" value="1"/>
</dbReference>
<dbReference type="Pfam" id="PF00591">
    <property type="entry name" value="Glycos_transf_3"/>
    <property type="match status" value="1"/>
</dbReference>
<dbReference type="SUPFAM" id="SSF52418">
    <property type="entry name" value="Nucleoside phosphorylase/phosphoribosyltransferase catalytic domain"/>
    <property type="match status" value="1"/>
</dbReference>
<dbReference type="SUPFAM" id="SSF47648">
    <property type="entry name" value="Nucleoside phosphorylase/phosphoribosyltransferase N-terminal domain"/>
    <property type="match status" value="1"/>
</dbReference>
<organism>
    <name type="scientific">Halorubrum lacusprofundi (strain ATCC 49239 / DSM 5036 / JCM 8891 / ACAM 34)</name>
    <dbReference type="NCBI Taxonomy" id="416348"/>
    <lineage>
        <taxon>Archaea</taxon>
        <taxon>Methanobacteriati</taxon>
        <taxon>Methanobacteriota</taxon>
        <taxon>Stenosarchaea group</taxon>
        <taxon>Halobacteria</taxon>
        <taxon>Halobacteriales</taxon>
        <taxon>Haloferacaceae</taxon>
        <taxon>Halorubrum</taxon>
    </lineage>
</organism>
<name>TRPD_HALLT</name>
<reference key="1">
    <citation type="journal article" date="2016" name="Stand. Genomic Sci.">
        <title>Complete genome sequence of the Antarctic Halorubrum lacusprofundi type strain ACAM 34.</title>
        <authorList>
            <person name="Anderson I.J."/>
            <person name="DasSarma P."/>
            <person name="Lucas S."/>
            <person name="Copeland A."/>
            <person name="Lapidus A."/>
            <person name="Del Rio T.G."/>
            <person name="Tice H."/>
            <person name="Dalin E."/>
            <person name="Bruce D.C."/>
            <person name="Goodwin L."/>
            <person name="Pitluck S."/>
            <person name="Sims D."/>
            <person name="Brettin T.S."/>
            <person name="Detter J.C."/>
            <person name="Han C.S."/>
            <person name="Larimer F."/>
            <person name="Hauser L."/>
            <person name="Land M."/>
            <person name="Ivanova N."/>
            <person name="Richardson P."/>
            <person name="Cavicchioli R."/>
            <person name="DasSarma S."/>
            <person name="Woese C.R."/>
            <person name="Kyrpides N.C."/>
        </authorList>
    </citation>
    <scope>NUCLEOTIDE SEQUENCE [LARGE SCALE GENOMIC DNA]</scope>
    <source>
        <strain>ATCC 49239 / DSM 5036 / JCM 8891 / ACAM 34</strain>
    </source>
</reference>
<proteinExistence type="inferred from homology"/>
<evidence type="ECO:0000255" key="1">
    <source>
        <dbReference type="HAMAP-Rule" id="MF_00211"/>
    </source>
</evidence>
<evidence type="ECO:0000256" key="2">
    <source>
        <dbReference type="SAM" id="MobiDB-lite"/>
    </source>
</evidence>
<sequence>MNINDTVERVTDGADLTVDEAREAARLVFEEATEAQIGALLAALRAKGETEAEIAGFAQGMRDAARTIEPDREPLVDTCGTGGDDYDTINVSTTAAIVAAGAGVPIAKHGNYSVSSSSGSADVLEVAGADVEAEPPAVEEAIETDGIGFMLAPVFHPAMKAVIGPRKELGMRTIFNVLGPLTNPAGADAQVLGVYDPDLVGTIARSLAHMPVEHALVVHGAGMDEIGIHDETVAAEVDGDEVREFTIAPEDLGLDRAPIEAVSGGTPEENAADLRGIVDGSVTGPKRDLILANAGAAIYVAGETDTLAAGVERAAEAIDSGAAATKFAALCGDDEAVEGDGEAASTDSAAASTTAGPEDDD</sequence>
<feature type="chain" id="PRO_1000198847" description="Anthranilate phosphoribosyltransferase">
    <location>
        <begin position="1"/>
        <end position="361"/>
    </location>
</feature>
<feature type="region of interest" description="Disordered" evidence="2">
    <location>
        <begin position="338"/>
        <end position="361"/>
    </location>
</feature>
<feature type="compositionally biased region" description="Low complexity" evidence="2">
    <location>
        <begin position="343"/>
        <end position="355"/>
    </location>
</feature>
<feature type="binding site" evidence="1">
    <location>
        <position position="80"/>
    </location>
    <ligand>
        <name>5-phospho-alpha-D-ribose 1-diphosphate</name>
        <dbReference type="ChEBI" id="CHEBI:58017"/>
    </ligand>
</feature>
<feature type="binding site" evidence="1">
    <location>
        <position position="80"/>
    </location>
    <ligand>
        <name>anthranilate</name>
        <dbReference type="ChEBI" id="CHEBI:16567"/>
        <label>1</label>
    </ligand>
</feature>
<feature type="binding site" evidence="1">
    <location>
        <begin position="83"/>
        <end position="84"/>
    </location>
    <ligand>
        <name>5-phospho-alpha-D-ribose 1-diphosphate</name>
        <dbReference type="ChEBI" id="CHEBI:58017"/>
    </ligand>
</feature>
<feature type="binding site" evidence="1">
    <location>
        <position position="88"/>
    </location>
    <ligand>
        <name>5-phospho-alpha-D-ribose 1-diphosphate</name>
        <dbReference type="ChEBI" id="CHEBI:58017"/>
    </ligand>
</feature>
<feature type="binding site" evidence="1">
    <location>
        <begin position="90"/>
        <end position="93"/>
    </location>
    <ligand>
        <name>5-phospho-alpha-D-ribose 1-diphosphate</name>
        <dbReference type="ChEBI" id="CHEBI:58017"/>
    </ligand>
</feature>
<feature type="binding site" evidence="1">
    <location>
        <position position="92"/>
    </location>
    <ligand>
        <name>Mg(2+)</name>
        <dbReference type="ChEBI" id="CHEBI:18420"/>
        <label>1</label>
    </ligand>
</feature>
<feature type="binding site" evidence="1">
    <location>
        <begin position="108"/>
        <end position="116"/>
    </location>
    <ligand>
        <name>5-phospho-alpha-D-ribose 1-diphosphate</name>
        <dbReference type="ChEBI" id="CHEBI:58017"/>
    </ligand>
</feature>
<feature type="binding site" evidence="1">
    <location>
        <position position="111"/>
    </location>
    <ligand>
        <name>anthranilate</name>
        <dbReference type="ChEBI" id="CHEBI:16567"/>
        <label>1</label>
    </ligand>
</feature>
<feature type="binding site" evidence="1">
    <location>
        <position position="120"/>
    </location>
    <ligand>
        <name>5-phospho-alpha-D-ribose 1-diphosphate</name>
        <dbReference type="ChEBI" id="CHEBI:58017"/>
    </ligand>
</feature>
<feature type="binding site" evidence="1">
    <location>
        <position position="166"/>
    </location>
    <ligand>
        <name>anthranilate</name>
        <dbReference type="ChEBI" id="CHEBI:16567"/>
        <label>2</label>
    </ligand>
</feature>
<feature type="binding site" evidence="1">
    <location>
        <position position="224"/>
    </location>
    <ligand>
        <name>Mg(2+)</name>
        <dbReference type="ChEBI" id="CHEBI:18420"/>
        <label>2</label>
    </ligand>
</feature>
<feature type="binding site" evidence="1">
    <location>
        <position position="225"/>
    </location>
    <ligand>
        <name>Mg(2+)</name>
        <dbReference type="ChEBI" id="CHEBI:18420"/>
        <label>1</label>
    </ligand>
</feature>
<feature type="binding site" evidence="1">
    <location>
        <position position="225"/>
    </location>
    <ligand>
        <name>Mg(2+)</name>
        <dbReference type="ChEBI" id="CHEBI:18420"/>
        <label>2</label>
    </ligand>
</feature>
<keyword id="KW-0028">Amino-acid biosynthesis</keyword>
<keyword id="KW-0057">Aromatic amino acid biosynthesis</keyword>
<keyword id="KW-0328">Glycosyltransferase</keyword>
<keyword id="KW-0460">Magnesium</keyword>
<keyword id="KW-0479">Metal-binding</keyword>
<keyword id="KW-1185">Reference proteome</keyword>
<keyword id="KW-0808">Transferase</keyword>
<keyword id="KW-0822">Tryptophan biosynthesis</keyword>
<protein>
    <recommendedName>
        <fullName evidence="1">Anthranilate phosphoribosyltransferase</fullName>
        <ecNumber evidence="1">2.4.2.18</ecNumber>
    </recommendedName>
</protein>